<evidence type="ECO:0000250" key="1"/>
<evidence type="ECO:0000255" key="2">
    <source>
        <dbReference type="PROSITE-ProRule" id="PRU00794"/>
    </source>
</evidence>
<evidence type="ECO:0000269" key="3">
    <source>
    </source>
</evidence>
<evidence type="ECO:0000269" key="4">
    <source>
    </source>
</evidence>
<evidence type="ECO:0000269" key="5">
    <source>
    </source>
</evidence>
<evidence type="ECO:0000269" key="6">
    <source>
    </source>
</evidence>
<evidence type="ECO:0000269" key="7">
    <source>
    </source>
</evidence>
<evidence type="ECO:0000269" key="8">
    <source>
    </source>
</evidence>
<evidence type="ECO:0000305" key="9"/>
<evidence type="ECO:0007829" key="10">
    <source>
        <dbReference type="PDB" id="4ZB3"/>
    </source>
</evidence>
<evidence type="ECO:0007829" key="11">
    <source>
        <dbReference type="PDB" id="4ZBP"/>
    </source>
</evidence>
<dbReference type="EC" id="3.6.1.-"/>
<dbReference type="EC" id="3.6.1.13"/>
<dbReference type="EC" id="3.6.1.22"/>
<dbReference type="EMBL" id="AL049640">
    <property type="protein sequence ID" value="CAB40989.1"/>
    <property type="molecule type" value="Genomic_DNA"/>
</dbReference>
<dbReference type="EMBL" id="AL161534">
    <property type="protein sequence ID" value="CAB78314.1"/>
    <property type="molecule type" value="Genomic_DNA"/>
</dbReference>
<dbReference type="EMBL" id="CP002687">
    <property type="protein sequence ID" value="AEE83167.1"/>
    <property type="molecule type" value="Genomic_DNA"/>
</dbReference>
<dbReference type="EMBL" id="CP002687">
    <property type="protein sequence ID" value="AEE83168.1"/>
    <property type="molecule type" value="Genomic_DNA"/>
</dbReference>
<dbReference type="EMBL" id="CP002687">
    <property type="protein sequence ID" value="AEE83169.1"/>
    <property type="molecule type" value="Genomic_DNA"/>
</dbReference>
<dbReference type="EMBL" id="AF325104">
    <property type="protein sequence ID" value="AAK17172.1"/>
    <property type="molecule type" value="mRNA"/>
</dbReference>
<dbReference type="EMBL" id="AF370209">
    <property type="protein sequence ID" value="AAK44024.1"/>
    <property type="molecule type" value="mRNA"/>
</dbReference>
<dbReference type="EMBL" id="AY056344">
    <property type="protein sequence ID" value="AAL07193.1"/>
    <property type="molecule type" value="mRNA"/>
</dbReference>
<dbReference type="EMBL" id="AY085375">
    <property type="protein sequence ID" value="AAM62604.1"/>
    <property type="molecule type" value="mRNA"/>
</dbReference>
<dbReference type="PIR" id="T06630">
    <property type="entry name" value="T06630"/>
</dbReference>
<dbReference type="RefSeq" id="NP_193008.1">
    <molecule id="Q9SU14-1"/>
    <property type="nucleotide sequence ID" value="NM_117341.5"/>
</dbReference>
<dbReference type="RefSeq" id="NP_849367.1">
    <molecule id="Q9SU14-1"/>
    <property type="nucleotide sequence ID" value="NM_179036.4"/>
</dbReference>
<dbReference type="RefSeq" id="NP_849368.1">
    <molecule id="Q9SU14-1"/>
    <property type="nucleotide sequence ID" value="NM_179037.3"/>
</dbReference>
<dbReference type="PDB" id="4ZB3">
    <property type="method" value="X-ray"/>
    <property type="resolution" value="2.30 A"/>
    <property type="chains" value="A=1-282"/>
</dbReference>
<dbReference type="PDB" id="4ZBP">
    <property type="method" value="X-ray"/>
    <property type="resolution" value="2.60 A"/>
    <property type="chains" value="A/B/C=1-282"/>
</dbReference>
<dbReference type="PDBsum" id="4ZB3"/>
<dbReference type="PDBsum" id="4ZBP"/>
<dbReference type="SMR" id="Q9SU14"/>
<dbReference type="BioGRID" id="12181">
    <property type="interactions" value="9"/>
</dbReference>
<dbReference type="FunCoup" id="Q9SU14">
    <property type="interactions" value="409"/>
</dbReference>
<dbReference type="STRING" id="3702.Q9SU14"/>
<dbReference type="ProteomicsDB" id="248853">
    <molecule id="Q9SU14-1"/>
</dbReference>
<dbReference type="EnsemblPlants" id="AT4G12720.1">
    <molecule id="Q9SU14-1"/>
    <property type="protein sequence ID" value="AT4G12720.1"/>
    <property type="gene ID" value="AT4G12720"/>
</dbReference>
<dbReference type="EnsemblPlants" id="AT4G12720.2">
    <molecule id="Q9SU14-1"/>
    <property type="protein sequence ID" value="AT4G12720.2"/>
    <property type="gene ID" value="AT4G12720"/>
</dbReference>
<dbReference type="EnsemblPlants" id="AT4G12720.3">
    <molecule id="Q9SU14-1"/>
    <property type="protein sequence ID" value="AT4G12720.3"/>
    <property type="gene ID" value="AT4G12720"/>
</dbReference>
<dbReference type="GeneID" id="826884"/>
<dbReference type="Gramene" id="AT4G12720.1">
    <molecule id="Q9SU14-1"/>
    <property type="protein sequence ID" value="AT4G12720.1"/>
    <property type="gene ID" value="AT4G12720"/>
</dbReference>
<dbReference type="Gramene" id="AT4G12720.2">
    <molecule id="Q9SU14-1"/>
    <property type="protein sequence ID" value="AT4G12720.2"/>
    <property type="gene ID" value="AT4G12720"/>
</dbReference>
<dbReference type="Gramene" id="AT4G12720.3">
    <molecule id="Q9SU14-1"/>
    <property type="protein sequence ID" value="AT4G12720.3"/>
    <property type="gene ID" value="AT4G12720"/>
</dbReference>
<dbReference type="KEGG" id="ath:AT4G12720"/>
<dbReference type="Araport" id="AT4G12720"/>
<dbReference type="TAIR" id="AT4G12720">
    <property type="gene designation" value="NUDT7"/>
</dbReference>
<dbReference type="HOGENOM" id="CLU_054299_1_2_1"/>
<dbReference type="InParanoid" id="Q9SU14"/>
<dbReference type="PhylomeDB" id="Q9SU14"/>
<dbReference type="BioCyc" id="ARA:AT4G12720-MONOMER"/>
<dbReference type="BRENDA" id="3.6.1.13">
    <property type="organism ID" value="399"/>
</dbReference>
<dbReference type="SABIO-RK" id="Q9SU14"/>
<dbReference type="CD-CODE" id="4299E36E">
    <property type="entry name" value="Nucleolus"/>
</dbReference>
<dbReference type="EvolutionaryTrace" id="Q9SU14"/>
<dbReference type="PRO" id="PR:Q9SU14"/>
<dbReference type="Proteomes" id="UP000006548">
    <property type="component" value="Chromosome 4"/>
</dbReference>
<dbReference type="ExpressionAtlas" id="Q9SU14">
    <property type="expression patterns" value="baseline and differential"/>
</dbReference>
<dbReference type="GO" id="GO:0005737">
    <property type="term" value="C:cytoplasm"/>
    <property type="evidence" value="ECO:0000314"/>
    <property type="project" value="UniProtKB"/>
</dbReference>
<dbReference type="GO" id="GO:0005634">
    <property type="term" value="C:nucleus"/>
    <property type="evidence" value="ECO:0000314"/>
    <property type="project" value="UniProtKB"/>
</dbReference>
<dbReference type="GO" id="GO:0005886">
    <property type="term" value="C:plasma membrane"/>
    <property type="evidence" value="ECO:0000314"/>
    <property type="project" value="UniProtKB"/>
</dbReference>
<dbReference type="GO" id="GO:0047631">
    <property type="term" value="F:ADP-ribose diphosphatase activity"/>
    <property type="evidence" value="ECO:0007669"/>
    <property type="project" value="UniProtKB-EC"/>
</dbReference>
<dbReference type="GO" id="GO:0046872">
    <property type="term" value="F:metal ion binding"/>
    <property type="evidence" value="ECO:0007669"/>
    <property type="project" value="UniProtKB-KW"/>
</dbReference>
<dbReference type="GO" id="GO:0000210">
    <property type="term" value="F:NAD+ diphosphatase activity"/>
    <property type="evidence" value="ECO:0007669"/>
    <property type="project" value="RHEA"/>
</dbReference>
<dbReference type="GO" id="GO:0035529">
    <property type="term" value="F:NADH pyrophosphatase activity"/>
    <property type="evidence" value="ECO:0007669"/>
    <property type="project" value="RHEA"/>
</dbReference>
<dbReference type="CDD" id="cd04670">
    <property type="entry name" value="NUDIX_ASFGF2_Nudt6"/>
    <property type="match status" value="1"/>
</dbReference>
<dbReference type="FunFam" id="3.40.630.30:FF:000016">
    <property type="entry name" value="nudix hydrolase 2"/>
    <property type="match status" value="1"/>
</dbReference>
<dbReference type="FunFam" id="3.90.79.10:FF:000015">
    <property type="entry name" value="Nudix hydrolase 8"/>
    <property type="match status" value="1"/>
</dbReference>
<dbReference type="Gene3D" id="3.40.630.30">
    <property type="match status" value="1"/>
</dbReference>
<dbReference type="Gene3D" id="3.90.79.10">
    <property type="entry name" value="Nucleoside Triphosphate Pyrophosphohydrolase"/>
    <property type="match status" value="1"/>
</dbReference>
<dbReference type="InterPro" id="IPR015797">
    <property type="entry name" value="NUDIX_hydrolase-like_dom_sf"/>
</dbReference>
<dbReference type="InterPro" id="IPR003293">
    <property type="entry name" value="Nudix_hydrolase6-like"/>
</dbReference>
<dbReference type="InterPro" id="IPR020084">
    <property type="entry name" value="NUDIX_hydrolase_CS"/>
</dbReference>
<dbReference type="InterPro" id="IPR000086">
    <property type="entry name" value="NUDIX_hydrolase_dom"/>
</dbReference>
<dbReference type="InterPro" id="IPR040618">
    <property type="entry name" value="Pre-Nudix"/>
</dbReference>
<dbReference type="PANTHER" id="PTHR13994:SF50">
    <property type="entry name" value="NUDIX HYDROLASE 7"/>
    <property type="match status" value="1"/>
</dbReference>
<dbReference type="PANTHER" id="PTHR13994">
    <property type="entry name" value="NUDIX HYDROLASE RELATED"/>
    <property type="match status" value="1"/>
</dbReference>
<dbReference type="Pfam" id="PF00293">
    <property type="entry name" value="NUDIX"/>
    <property type="match status" value="1"/>
</dbReference>
<dbReference type="Pfam" id="PF18290">
    <property type="entry name" value="Nudix_hydro"/>
    <property type="match status" value="1"/>
</dbReference>
<dbReference type="PRINTS" id="PR01356">
    <property type="entry name" value="GFGPROTEIN"/>
</dbReference>
<dbReference type="SUPFAM" id="SSF55811">
    <property type="entry name" value="Nudix"/>
    <property type="match status" value="1"/>
</dbReference>
<dbReference type="PROSITE" id="PS51462">
    <property type="entry name" value="NUDIX"/>
    <property type="match status" value="1"/>
</dbReference>
<dbReference type="PROSITE" id="PS00893">
    <property type="entry name" value="NUDIX_BOX"/>
    <property type="match status" value="1"/>
</dbReference>
<organism>
    <name type="scientific">Arabidopsis thaliana</name>
    <name type="common">Mouse-ear cress</name>
    <dbReference type="NCBI Taxonomy" id="3702"/>
    <lineage>
        <taxon>Eukaryota</taxon>
        <taxon>Viridiplantae</taxon>
        <taxon>Streptophyta</taxon>
        <taxon>Embryophyta</taxon>
        <taxon>Tracheophyta</taxon>
        <taxon>Spermatophyta</taxon>
        <taxon>Magnoliopsida</taxon>
        <taxon>eudicotyledons</taxon>
        <taxon>Gunneridae</taxon>
        <taxon>Pentapetalae</taxon>
        <taxon>rosids</taxon>
        <taxon>malvids</taxon>
        <taxon>Brassicales</taxon>
        <taxon>Brassicaceae</taxon>
        <taxon>Camelineae</taxon>
        <taxon>Arabidopsis</taxon>
    </lineage>
</organism>
<name>NUDT7_ARATH</name>
<keyword id="KW-0002">3D-structure</keyword>
<keyword id="KW-0025">Alternative splicing</keyword>
<keyword id="KW-1003">Cell membrane</keyword>
<keyword id="KW-0963">Cytoplasm</keyword>
<keyword id="KW-0378">Hydrolase</keyword>
<keyword id="KW-0460">Magnesium</keyword>
<keyword id="KW-0472">Membrane</keyword>
<keyword id="KW-0479">Metal-binding</keyword>
<keyword id="KW-0520">NAD</keyword>
<keyword id="KW-0539">Nucleus</keyword>
<keyword id="KW-1185">Reference proteome</keyword>
<proteinExistence type="evidence at protein level"/>
<accession>Q9SU14</accession>
<accession>Q8LEK5</accession>
<reference key="1">
    <citation type="journal article" date="1999" name="Nature">
        <title>Sequence and analysis of chromosome 4 of the plant Arabidopsis thaliana.</title>
        <authorList>
            <person name="Mayer K.F.X."/>
            <person name="Schueller C."/>
            <person name="Wambutt R."/>
            <person name="Murphy G."/>
            <person name="Volckaert G."/>
            <person name="Pohl T."/>
            <person name="Duesterhoeft A."/>
            <person name="Stiekema W."/>
            <person name="Entian K.-D."/>
            <person name="Terryn N."/>
            <person name="Harris B."/>
            <person name="Ansorge W."/>
            <person name="Brandt P."/>
            <person name="Grivell L.A."/>
            <person name="Rieger M."/>
            <person name="Weichselgartner M."/>
            <person name="de Simone V."/>
            <person name="Obermaier B."/>
            <person name="Mache R."/>
            <person name="Mueller M."/>
            <person name="Kreis M."/>
            <person name="Delseny M."/>
            <person name="Puigdomenech P."/>
            <person name="Watson M."/>
            <person name="Schmidtheini T."/>
            <person name="Reichert B."/>
            <person name="Portetelle D."/>
            <person name="Perez-Alonso M."/>
            <person name="Boutry M."/>
            <person name="Bancroft I."/>
            <person name="Vos P."/>
            <person name="Hoheisel J."/>
            <person name="Zimmermann W."/>
            <person name="Wedler H."/>
            <person name="Ridley P."/>
            <person name="Langham S.-A."/>
            <person name="McCullagh B."/>
            <person name="Bilham L."/>
            <person name="Robben J."/>
            <person name="van der Schueren J."/>
            <person name="Grymonprez B."/>
            <person name="Chuang Y.-J."/>
            <person name="Vandenbussche F."/>
            <person name="Braeken M."/>
            <person name="Weltjens I."/>
            <person name="Voet M."/>
            <person name="Bastiaens I."/>
            <person name="Aert R."/>
            <person name="Defoor E."/>
            <person name="Weitzenegger T."/>
            <person name="Bothe G."/>
            <person name="Ramsperger U."/>
            <person name="Hilbert H."/>
            <person name="Braun M."/>
            <person name="Holzer E."/>
            <person name="Brandt A."/>
            <person name="Peters S."/>
            <person name="van Staveren M."/>
            <person name="Dirkse W."/>
            <person name="Mooijman P."/>
            <person name="Klein Lankhorst R."/>
            <person name="Rose M."/>
            <person name="Hauf J."/>
            <person name="Koetter P."/>
            <person name="Berneiser S."/>
            <person name="Hempel S."/>
            <person name="Feldpausch M."/>
            <person name="Lamberth S."/>
            <person name="Van den Daele H."/>
            <person name="De Keyser A."/>
            <person name="Buysshaert C."/>
            <person name="Gielen J."/>
            <person name="Villarroel R."/>
            <person name="De Clercq R."/>
            <person name="van Montagu M."/>
            <person name="Rogers J."/>
            <person name="Cronin A."/>
            <person name="Quail M.A."/>
            <person name="Bray-Allen S."/>
            <person name="Clark L."/>
            <person name="Doggett J."/>
            <person name="Hall S."/>
            <person name="Kay M."/>
            <person name="Lennard N."/>
            <person name="McLay K."/>
            <person name="Mayes R."/>
            <person name="Pettett A."/>
            <person name="Rajandream M.A."/>
            <person name="Lyne M."/>
            <person name="Benes V."/>
            <person name="Rechmann S."/>
            <person name="Borkova D."/>
            <person name="Bloecker H."/>
            <person name="Scharfe M."/>
            <person name="Grimm M."/>
            <person name="Loehnert T.-H."/>
            <person name="Dose S."/>
            <person name="de Haan M."/>
            <person name="Maarse A.C."/>
            <person name="Schaefer M."/>
            <person name="Mueller-Auer S."/>
            <person name="Gabel C."/>
            <person name="Fuchs M."/>
            <person name="Fartmann B."/>
            <person name="Granderath K."/>
            <person name="Dauner D."/>
            <person name="Herzl A."/>
            <person name="Neumann S."/>
            <person name="Argiriou A."/>
            <person name="Vitale D."/>
            <person name="Liguori R."/>
            <person name="Piravandi E."/>
            <person name="Massenet O."/>
            <person name="Quigley F."/>
            <person name="Clabauld G."/>
            <person name="Muendlein A."/>
            <person name="Felber R."/>
            <person name="Schnabl S."/>
            <person name="Hiller R."/>
            <person name="Schmidt W."/>
            <person name="Lecharny A."/>
            <person name="Aubourg S."/>
            <person name="Chefdor F."/>
            <person name="Cooke R."/>
            <person name="Berger C."/>
            <person name="Monfort A."/>
            <person name="Casacuberta E."/>
            <person name="Gibbons T."/>
            <person name="Weber N."/>
            <person name="Vandenbol M."/>
            <person name="Bargues M."/>
            <person name="Terol J."/>
            <person name="Torres A."/>
            <person name="Perez-Perez A."/>
            <person name="Purnelle B."/>
            <person name="Bent E."/>
            <person name="Johnson S."/>
            <person name="Tacon D."/>
            <person name="Jesse T."/>
            <person name="Heijnen L."/>
            <person name="Schwarz S."/>
            <person name="Scholler P."/>
            <person name="Heber S."/>
            <person name="Francs P."/>
            <person name="Bielke C."/>
            <person name="Frishman D."/>
            <person name="Haase D."/>
            <person name="Lemcke K."/>
            <person name="Mewes H.-W."/>
            <person name="Stocker S."/>
            <person name="Zaccaria P."/>
            <person name="Bevan M."/>
            <person name="Wilson R.K."/>
            <person name="de la Bastide M."/>
            <person name="Habermann K."/>
            <person name="Parnell L."/>
            <person name="Dedhia N."/>
            <person name="Gnoj L."/>
            <person name="Schutz K."/>
            <person name="Huang E."/>
            <person name="Spiegel L."/>
            <person name="Sekhon M."/>
            <person name="Murray J."/>
            <person name="Sheet P."/>
            <person name="Cordes M."/>
            <person name="Abu-Threideh J."/>
            <person name="Stoneking T."/>
            <person name="Kalicki J."/>
            <person name="Graves T."/>
            <person name="Harmon G."/>
            <person name="Edwards J."/>
            <person name="Latreille P."/>
            <person name="Courtney L."/>
            <person name="Cloud J."/>
            <person name="Abbott A."/>
            <person name="Scott K."/>
            <person name="Johnson D."/>
            <person name="Minx P."/>
            <person name="Bentley D."/>
            <person name="Fulton B."/>
            <person name="Miller N."/>
            <person name="Greco T."/>
            <person name="Kemp K."/>
            <person name="Kramer J."/>
            <person name="Fulton L."/>
            <person name="Mardis E."/>
            <person name="Dante M."/>
            <person name="Pepin K."/>
            <person name="Hillier L.W."/>
            <person name="Nelson J."/>
            <person name="Spieth J."/>
            <person name="Ryan E."/>
            <person name="Andrews S."/>
            <person name="Geisel C."/>
            <person name="Layman D."/>
            <person name="Du H."/>
            <person name="Ali J."/>
            <person name="Berghoff A."/>
            <person name="Jones K."/>
            <person name="Drone K."/>
            <person name="Cotton M."/>
            <person name="Joshu C."/>
            <person name="Antonoiu B."/>
            <person name="Zidanic M."/>
            <person name="Strong C."/>
            <person name="Sun H."/>
            <person name="Lamar B."/>
            <person name="Yordan C."/>
            <person name="Ma P."/>
            <person name="Zhong J."/>
            <person name="Preston R."/>
            <person name="Vil D."/>
            <person name="Shekher M."/>
            <person name="Matero A."/>
            <person name="Shah R."/>
            <person name="Swaby I.K."/>
            <person name="O'Shaughnessy A."/>
            <person name="Rodriguez M."/>
            <person name="Hoffman J."/>
            <person name="Till S."/>
            <person name="Granat S."/>
            <person name="Shohdy N."/>
            <person name="Hasegawa A."/>
            <person name="Hameed A."/>
            <person name="Lodhi M."/>
            <person name="Johnson A."/>
            <person name="Chen E."/>
            <person name="Marra M.A."/>
            <person name="Martienssen R."/>
            <person name="McCombie W.R."/>
        </authorList>
    </citation>
    <scope>NUCLEOTIDE SEQUENCE [LARGE SCALE GENOMIC DNA]</scope>
    <source>
        <strain>cv. Columbia</strain>
    </source>
</reference>
<reference key="2">
    <citation type="journal article" date="2017" name="Plant J.">
        <title>Araport11: a complete reannotation of the Arabidopsis thaliana reference genome.</title>
        <authorList>
            <person name="Cheng C.Y."/>
            <person name="Krishnakumar V."/>
            <person name="Chan A.P."/>
            <person name="Thibaud-Nissen F."/>
            <person name="Schobel S."/>
            <person name="Town C.D."/>
        </authorList>
    </citation>
    <scope>GENOME REANNOTATION</scope>
    <source>
        <strain>cv. Columbia</strain>
    </source>
</reference>
<reference key="3">
    <citation type="journal article" date="2003" name="Science">
        <title>Empirical analysis of transcriptional activity in the Arabidopsis genome.</title>
        <authorList>
            <person name="Yamada K."/>
            <person name="Lim J."/>
            <person name="Dale J.M."/>
            <person name="Chen H."/>
            <person name="Shinn P."/>
            <person name="Palm C.J."/>
            <person name="Southwick A.M."/>
            <person name="Wu H.C."/>
            <person name="Kim C.J."/>
            <person name="Nguyen M."/>
            <person name="Pham P.K."/>
            <person name="Cheuk R.F."/>
            <person name="Karlin-Newmann G."/>
            <person name="Liu S.X."/>
            <person name="Lam B."/>
            <person name="Sakano H."/>
            <person name="Wu T."/>
            <person name="Yu G."/>
            <person name="Miranda M."/>
            <person name="Quach H.L."/>
            <person name="Tripp M."/>
            <person name="Chang C.H."/>
            <person name="Lee J.M."/>
            <person name="Toriumi M.J."/>
            <person name="Chan M.M."/>
            <person name="Tang C.C."/>
            <person name="Onodera C.S."/>
            <person name="Deng J.M."/>
            <person name="Akiyama K."/>
            <person name="Ansari Y."/>
            <person name="Arakawa T."/>
            <person name="Banh J."/>
            <person name="Banno F."/>
            <person name="Bowser L."/>
            <person name="Brooks S.Y."/>
            <person name="Carninci P."/>
            <person name="Chao Q."/>
            <person name="Choy N."/>
            <person name="Enju A."/>
            <person name="Goldsmith A.D."/>
            <person name="Gurjal M."/>
            <person name="Hansen N.F."/>
            <person name="Hayashizaki Y."/>
            <person name="Johnson-Hopson C."/>
            <person name="Hsuan V.W."/>
            <person name="Iida K."/>
            <person name="Karnes M."/>
            <person name="Khan S."/>
            <person name="Koesema E."/>
            <person name="Ishida J."/>
            <person name="Jiang P.X."/>
            <person name="Jones T."/>
            <person name="Kawai J."/>
            <person name="Kamiya A."/>
            <person name="Meyers C."/>
            <person name="Nakajima M."/>
            <person name="Narusaka M."/>
            <person name="Seki M."/>
            <person name="Sakurai T."/>
            <person name="Satou M."/>
            <person name="Tamse R."/>
            <person name="Vaysberg M."/>
            <person name="Wallender E.K."/>
            <person name="Wong C."/>
            <person name="Yamamura Y."/>
            <person name="Yuan S."/>
            <person name="Shinozaki K."/>
            <person name="Davis R.W."/>
            <person name="Theologis A."/>
            <person name="Ecker J.R."/>
        </authorList>
    </citation>
    <scope>NUCLEOTIDE SEQUENCE [LARGE SCALE MRNA]</scope>
    <source>
        <strain>cv. Columbia</strain>
    </source>
</reference>
<reference key="4">
    <citation type="submission" date="2002-03" db="EMBL/GenBank/DDBJ databases">
        <title>Full-length cDNA from Arabidopsis thaliana.</title>
        <authorList>
            <person name="Brover V.V."/>
            <person name="Troukhan M.E."/>
            <person name="Alexandrov N.A."/>
            <person name="Lu Y.-P."/>
            <person name="Flavell R.B."/>
            <person name="Feldmann K.A."/>
        </authorList>
    </citation>
    <scope>NUCLEOTIDE SEQUENCE [LARGE SCALE MRNA]</scope>
</reference>
<reference key="5">
    <citation type="journal article" date="2005" name="J. Biol. Chem.">
        <title>Comprehensive analysis of cytosolic nudix hydrolases in Arabidopsis thaliana.</title>
        <authorList>
            <person name="Ogawa T."/>
            <person name="Ueda Y."/>
            <person name="Yoshimura K."/>
            <person name="Shigeoka S."/>
        </authorList>
    </citation>
    <scope>FUNCTION IN VITRO</scope>
    <scope>TISSUE SPECIFICITY</scope>
</reference>
<reference key="6">
    <citation type="journal article" date="2005" name="Biochim. Biophys. Acta">
        <title>Cloning and characterization of an Arabidopsis thaliana Nudix hydrolase homologous to the mammalian GFG protein.</title>
        <authorList>
            <person name="Olejnik K."/>
            <person name="Kraszewska E."/>
        </authorList>
    </citation>
    <scope>FUNCTION</scope>
    <scope>SUBUNIT</scope>
    <scope>BIOPHYSICOCHEMICAL PROPERTIES</scope>
</reference>
<reference key="7">
    <citation type="journal article" date="2006" name="Plant Cell">
        <title>Salicylic acid-independent ENHANCED DISEASE SUSCEPTIBILITY1 signaling in Arabidopsis immunity and cell death is regulated by the monooxygenase FMO1 and the Nudix hydrolase NUDT7.</title>
        <authorList>
            <person name="Bartsch M."/>
            <person name="Gobbato E."/>
            <person name="Bednarek P."/>
            <person name="Debey S."/>
            <person name="Schultze J.L."/>
            <person name="Bautor J."/>
            <person name="Parker J.E."/>
        </authorList>
    </citation>
    <scope>FUNCTION</scope>
    <scope>DISRUPTION PHENOTYPE</scope>
</reference>
<reference key="8">
    <citation type="journal article" date="2006" name="Planta">
        <title>Analysis of Arabidopsis growth factor gene 1 (GFG1) encoding a nudix hydrolase during oxidative signaling.</title>
        <authorList>
            <person name="Jambunathan N."/>
            <person name="Mahalingam R."/>
        </authorList>
    </citation>
    <scope>FUNCTION</scope>
    <scope>TISSUE SPECIFICITY</scope>
    <scope>INDUCTION</scope>
    <scope>BIOPHYSICOCHEMICAL PROPERTIES</scope>
    <scope>DISRUPTION PHENOTYPE</scope>
</reference>
<reference key="9">
    <citation type="journal article" date="2007" name="Plant Physiol.">
        <title>AtNUDT7, a negative regulator of basal immunity in Arabidopsis, modulates two distinct defense response pathways and is involved in maintaining redox homeostasis.</title>
        <authorList>
            <person name="Ge X."/>
            <person name="Li G.-J."/>
            <person name="Wang S.-B."/>
            <person name="Zhu H."/>
            <person name="Zhu T."/>
            <person name="Wang X."/>
            <person name="Xia Y."/>
        </authorList>
    </citation>
    <scope>FUNCTION</scope>
    <scope>MUTAGENESIS OF GLU-154</scope>
    <scope>INDUCTION</scope>
    <scope>DISRUPTION PHENOTYPE</scope>
</reference>
<reference key="10">
    <citation type="journal article" date="2011" name="Acta Biochim. Pol.">
        <title>Arabidopsis thaliana Nudix hydrolase AtNUDT7 forms complexes with the regulatory RACK1A protein and Ggamma subunits of the signal transducing heterotrimeric G protein.</title>
        <authorList>
            <person name="Olejnik K."/>
            <person name="Bucholc M."/>
            <person name="Anielska-Mazur A."/>
            <person name="Lipko A."/>
            <person name="Kujawa M."/>
            <person name="Modzelan M."/>
            <person name="Augustyn A."/>
            <person name="Kraszewska E."/>
        </authorList>
    </citation>
    <scope>INTERACTION WITH RACK1A; GG1 AND GG2</scope>
    <scope>SUBCELLULAR LOCATION</scope>
</reference>
<gene>
    <name type="primary">NUDT7</name>
    <name type="synonym">GFG1</name>
    <name type="synonym">NUDX7</name>
    <name type="ordered locus">At4g12720</name>
    <name type="ORF">T20K18.70</name>
</gene>
<protein>
    <recommendedName>
        <fullName>Nudix hydrolase 7</fullName>
        <shortName>AtNUDT7</shortName>
        <ecNumber>3.6.1.-</ecNumber>
    </recommendedName>
    <alternativeName>
        <fullName>ADP-ribose pyrophosphatase</fullName>
        <ecNumber>3.6.1.13</ecNumber>
    </alternativeName>
    <alternativeName>
        <fullName>NADH pyrophosphatase</fullName>
        <ecNumber>3.6.1.22</ecNumber>
    </alternativeName>
    <alternativeName>
        <fullName>Protein GROWTH FACTOR GENE 1</fullName>
    </alternativeName>
</protein>
<feature type="chain" id="PRO_0000057127" description="Nudix hydrolase 7">
    <location>
        <begin position="1"/>
        <end position="282"/>
    </location>
</feature>
<feature type="domain" description="Nudix hydrolase" evidence="2">
    <location>
        <begin position="101"/>
        <end position="233"/>
    </location>
</feature>
<feature type="short sequence motif" description="Nudix box">
    <location>
        <begin position="139"/>
        <end position="160"/>
    </location>
</feature>
<feature type="binding site" evidence="1">
    <location>
        <position position="154"/>
    </location>
    <ligand>
        <name>Mg(2+)</name>
        <dbReference type="ChEBI" id="CHEBI:18420"/>
    </ligand>
</feature>
<feature type="binding site" evidence="1">
    <location>
        <position position="158"/>
    </location>
    <ligand>
        <name>Mg(2+)</name>
        <dbReference type="ChEBI" id="CHEBI:18420"/>
    </ligand>
</feature>
<feature type="mutagenesis site" description="Loss of hydrolase activity." evidence="7">
    <original>E</original>
    <variation>Q</variation>
    <location>
        <position position="154"/>
    </location>
</feature>
<feature type="sequence conflict" description="In Ref. 4; AAM62604." evidence="9" ref="4">
    <original>Q</original>
    <variation>L</variation>
    <location>
        <position position="6"/>
    </location>
</feature>
<feature type="sequence conflict" description="In Ref. 4; AAM62604." evidence="9" ref="4">
    <original>V</original>
    <variation>I</variation>
    <location>
        <position position="217"/>
    </location>
</feature>
<feature type="strand" evidence="10">
    <location>
        <begin position="21"/>
        <end position="24"/>
    </location>
</feature>
<feature type="helix" evidence="10">
    <location>
        <begin position="31"/>
        <end position="47"/>
    </location>
</feature>
<feature type="strand" evidence="10">
    <location>
        <begin position="52"/>
        <end position="58"/>
    </location>
</feature>
<feature type="helix" evidence="10">
    <location>
        <begin position="59"/>
        <end position="64"/>
    </location>
</feature>
<feature type="helix" evidence="10">
    <location>
        <begin position="65"/>
        <end position="70"/>
    </location>
</feature>
<feature type="strand" evidence="10">
    <location>
        <begin position="74"/>
        <end position="79"/>
    </location>
</feature>
<feature type="strand" evidence="10">
    <location>
        <begin position="82"/>
        <end position="88"/>
    </location>
</feature>
<feature type="strand" evidence="10">
    <location>
        <begin position="90"/>
        <end position="92"/>
    </location>
</feature>
<feature type="strand" evidence="10">
    <location>
        <begin position="102"/>
        <end position="112"/>
    </location>
</feature>
<feature type="turn" evidence="10">
    <location>
        <begin position="113"/>
        <end position="116"/>
    </location>
</feature>
<feature type="strand" evidence="10">
    <location>
        <begin position="117"/>
        <end position="126"/>
    </location>
</feature>
<feature type="turn" evidence="10">
    <location>
        <begin position="127"/>
        <end position="132"/>
    </location>
</feature>
<feature type="strand" evidence="10">
    <location>
        <begin position="138"/>
        <end position="140"/>
    </location>
</feature>
<feature type="helix" evidence="10">
    <location>
        <begin position="147"/>
        <end position="159"/>
    </location>
</feature>
<feature type="strand" evidence="10">
    <location>
        <begin position="163"/>
        <end position="174"/>
    </location>
</feature>
<feature type="strand" evidence="10">
    <location>
        <begin position="183"/>
        <end position="194"/>
    </location>
</feature>
<feature type="strand" evidence="10">
    <location>
        <begin position="202"/>
        <end position="212"/>
    </location>
</feature>
<feature type="helix" evidence="10">
    <location>
        <begin position="213"/>
        <end position="218"/>
    </location>
</feature>
<feature type="helix" evidence="10">
    <location>
        <begin position="220"/>
        <end position="223"/>
    </location>
</feature>
<feature type="helix" evidence="10">
    <location>
        <begin position="226"/>
        <end position="239"/>
    </location>
</feature>
<feature type="strand" evidence="10">
    <location>
        <begin position="246"/>
        <end position="252"/>
    </location>
</feature>
<feature type="strand" evidence="11">
    <location>
        <begin position="254"/>
        <end position="256"/>
    </location>
</feature>
<feature type="strand" evidence="10">
    <location>
        <begin position="258"/>
        <end position="263"/>
    </location>
</feature>
<feature type="helix" evidence="11">
    <location>
        <begin position="265"/>
        <end position="273"/>
    </location>
</feature>
<comment type="function">
    <text evidence="3 4 5 6 7">Mediates the hydrolysis of some nucleoside diphosphate derivatives. Can use both NADH and ADP-ribose as substrates, but not 8-oxo-dGTP, cyclic ADP-ribose, GDP-mannose, UDP-glucose, ATP, or GTP. Exerts negative control of EDS1 signaling.</text>
</comment>
<comment type="catalytic activity">
    <reaction>
        <text>ADP-D-ribose + H2O = D-ribose 5-phosphate + AMP + 2 H(+)</text>
        <dbReference type="Rhea" id="RHEA:10412"/>
        <dbReference type="ChEBI" id="CHEBI:15377"/>
        <dbReference type="ChEBI" id="CHEBI:15378"/>
        <dbReference type="ChEBI" id="CHEBI:57967"/>
        <dbReference type="ChEBI" id="CHEBI:78346"/>
        <dbReference type="ChEBI" id="CHEBI:456215"/>
        <dbReference type="EC" id="3.6.1.13"/>
    </reaction>
</comment>
<comment type="catalytic activity">
    <reaction>
        <text>NAD(+) + H2O = beta-nicotinamide D-ribonucleotide + AMP + 2 H(+)</text>
        <dbReference type="Rhea" id="RHEA:11800"/>
        <dbReference type="ChEBI" id="CHEBI:14649"/>
        <dbReference type="ChEBI" id="CHEBI:15377"/>
        <dbReference type="ChEBI" id="CHEBI:15378"/>
        <dbReference type="ChEBI" id="CHEBI:57540"/>
        <dbReference type="ChEBI" id="CHEBI:456215"/>
        <dbReference type="EC" id="3.6.1.22"/>
    </reaction>
</comment>
<comment type="catalytic activity">
    <reaction>
        <text>NADH + H2O = reduced beta-nicotinamide D-ribonucleotide + AMP + 2 H(+)</text>
        <dbReference type="Rhea" id="RHEA:48868"/>
        <dbReference type="ChEBI" id="CHEBI:15377"/>
        <dbReference type="ChEBI" id="CHEBI:15378"/>
        <dbReference type="ChEBI" id="CHEBI:57945"/>
        <dbReference type="ChEBI" id="CHEBI:90832"/>
        <dbReference type="ChEBI" id="CHEBI:456215"/>
        <dbReference type="EC" id="3.6.1.22"/>
    </reaction>
</comment>
<comment type="cofactor">
    <cofactor>
        <name>Mg(2+)</name>
        <dbReference type="ChEBI" id="CHEBI:18420"/>
    </cofactor>
</comment>
<comment type="activity regulation">
    <text>Not inhibited by fluoride.</text>
</comment>
<comment type="biophysicochemical properties">
    <kinetics>
        <KM evidence="4 5">26.23 uM for NADH</KM>
        <KM evidence="4 5">25.8 uM for ADP-ribose</KM>
        <Vmax evidence="4 5">3.681 nmol/min/mg enzyme with NADH as substrate</Vmax>
        <Vmax evidence="4 5">2678.0 nmol/min/mg enzyme with ADP-ribose as substrate</Vmax>
    </kinetics>
    <phDependence>
        <text evidence="4 5">Optimum pH is 8.5.</text>
    </phDependence>
    <temperatureDependence>
        <text evidence="4 5">Optimum temperature is 50 degrees Celsius.</text>
    </temperatureDependence>
</comment>
<comment type="subunit">
    <text evidence="4 8">Homodimer. Interacts with RACK1A, GG1 and GG2.</text>
</comment>
<comment type="subcellular location">
    <subcellularLocation>
        <location evidence="8">Nucleus</location>
    </subcellularLocation>
    <subcellularLocation>
        <location evidence="8">Cytoplasm</location>
    </subcellularLocation>
    <subcellularLocation>
        <location evidence="8">Cell membrane</location>
    </subcellularLocation>
    <text>Localized at the plasma membrane when in complex with GG2, but present in the cytoplasm when associated with GG1. Detected in the cytoplasm and nucleus when interacting with RACK1A.</text>
</comment>
<comment type="alternative products">
    <event type="alternative splicing"/>
    <isoform>
        <id>Q9SU14-1</id>
        <name>1</name>
        <sequence type="displayed"/>
    </isoform>
    <text>A number of isoforms are produced. According to EST sequences.</text>
</comment>
<comment type="tissue specificity">
    <text evidence="3 5">Expressed in stems, leaves, roots, flowers and siliques.</text>
</comment>
<comment type="induction">
    <text evidence="5 7">Rapid and transient induction by biotic and abiotic stresses. Not induced by H(2)O(2).</text>
</comment>
<comment type="disruption phenotype">
    <text evidence="5 6 7">Growth retardation, constitutive pathogen resistance phenotype and increased levels of reactive oxygen species and NADH.</text>
</comment>
<comment type="similarity">
    <text evidence="9">Belongs to the Nudix hydrolase family.</text>
</comment>
<sequence length="282" mass="31884">MGTRAQQIPLLEGETDNYDGVTVTMVEPMDSEVFTESLRASLSHWREEGKKGIWIKLPLGLANLVEAAVSEGFRYHHAEPEYLMLVSWISETPDTIPANASHVVGAGALVINKNTKEVLVVQERSGFFKDKNVWKLPTGVINEGEDIWTGVAREVEEETGIIADFVEVLAFRQSHKAILKKKTDMFFLCVLSPRSYDITEQKSEILQAKWMPIQEYVDQPWNKKNEMFKFMANICQKKCEEEYLGFAIVPTTTSSGKESFIYCNADHAKRLKVSRDQASASL</sequence>